<keyword id="KW-0030">Aminoacyl-tRNA synthetase</keyword>
<keyword id="KW-0067">ATP-binding</keyword>
<keyword id="KW-0963">Cytoplasm</keyword>
<keyword id="KW-0436">Ligase</keyword>
<keyword id="KW-0479">Metal-binding</keyword>
<keyword id="KW-0547">Nucleotide-binding</keyword>
<keyword id="KW-0648">Protein biosynthesis</keyword>
<keyword id="KW-1185">Reference proteome</keyword>
<keyword id="KW-0862">Zinc</keyword>
<proteinExistence type="inferred from homology"/>
<accession>Q889E4</accession>
<feature type="chain" id="PRO_0000098450" description="Isoleucine--tRNA ligase">
    <location>
        <begin position="1"/>
        <end position="943"/>
    </location>
</feature>
<feature type="short sequence motif" description="'HIGH' region">
    <location>
        <begin position="58"/>
        <end position="68"/>
    </location>
</feature>
<feature type="short sequence motif" description="'KMSKS' region">
    <location>
        <begin position="608"/>
        <end position="612"/>
    </location>
</feature>
<feature type="binding site" evidence="1">
    <location>
        <position position="567"/>
    </location>
    <ligand>
        <name>L-isoleucyl-5'-AMP</name>
        <dbReference type="ChEBI" id="CHEBI:178002"/>
    </ligand>
</feature>
<feature type="binding site" evidence="1">
    <location>
        <position position="611"/>
    </location>
    <ligand>
        <name>ATP</name>
        <dbReference type="ChEBI" id="CHEBI:30616"/>
    </ligand>
</feature>
<feature type="binding site" evidence="1">
    <location>
        <position position="906"/>
    </location>
    <ligand>
        <name>Zn(2+)</name>
        <dbReference type="ChEBI" id="CHEBI:29105"/>
    </ligand>
</feature>
<feature type="binding site" evidence="1">
    <location>
        <position position="909"/>
    </location>
    <ligand>
        <name>Zn(2+)</name>
        <dbReference type="ChEBI" id="CHEBI:29105"/>
    </ligand>
</feature>
<feature type="binding site" evidence="1">
    <location>
        <position position="926"/>
    </location>
    <ligand>
        <name>Zn(2+)</name>
        <dbReference type="ChEBI" id="CHEBI:29105"/>
    </ligand>
</feature>
<feature type="binding site" evidence="1">
    <location>
        <position position="929"/>
    </location>
    <ligand>
        <name>Zn(2+)</name>
        <dbReference type="ChEBI" id="CHEBI:29105"/>
    </ligand>
</feature>
<sequence length="943" mass="105848">MTDYKATLNLPDTAFPMKAGLPQREPQTLQRWDSIGLYQKLREIGKDRPKFVLHDGPPYANGTIHIGHAVNKILKDMILRSKTLAGFDAPYVPGWDCHGLPIEHKVEVTHGKNLSADRTRELCRAYAAEQIEGQKSEFIRLGVLGDWSNPYLTMNFANEAGEIRALAEMVKGGFVFKGLKPVNWCFDCGSALAEAEVEYQDKKSSTIDVAFPIADEAKLAAAFGLPSLGKPASIVIWTTTPWTIPANQALNVHPEFEYSLVDVGDKLLVLASELVESCLARYKLEGTVVATTTGQALELINFRHPFYDRLSPIYLAEYVELSAGTGIVHCSPAYGVDDFTICKQYGLSNDDIISPVQSNGVYVESLEFFGGQFIFKANQNIIDKLVEVGSLMDTETISHSYMHCWRHKSPLIYRATAQWFVGMDKQPESGETLRKRAVKAIEDTEFVPAWGQARLHSMIANRPDWCISRQRNWGVPIPFFLHKESGDLHPRTVELMEEVALRVEKEGIEAWFKLDASELLGDEAAKYDKISDTLDVWFDSGTTHWHVLRGSHPMGHETGPRADLYLEGSDQHRGWFHSSLLTGCMLDDHAPYRELLTHGFVVDENGRKMSKSLNNVVAPQKVNDSLGADIMRLWVSATDYSGEMAVSDQILQRSADAYRRIRNTARFLLSNLSGFNPATDILPAEEMLALDRWAVDRTLLLQRELQEHYGEYRFWNVYSKIHNFCVQELGGFYLDIIKDRQYTTAADSTARRSCQTALFHISEALVRWIAPILAFTADELWQFLPGERNESVMLNTWYEGLTELPADFEMDRAYWERIMAVKTSVNKEMENLRAAKAIGGNLQAEVTLYAEDSLVADLSKLSNELRFVLITSTASVAPFVSAPADAVVTEVAGLKLKVVKSGHAKCARCWHHREDVGVNPEHPEICGRCIDNISGAGEVRHYA</sequence>
<evidence type="ECO:0000255" key="1">
    <source>
        <dbReference type="HAMAP-Rule" id="MF_02002"/>
    </source>
</evidence>
<name>SYI_PSESM</name>
<reference key="1">
    <citation type="journal article" date="2003" name="Proc. Natl. Acad. Sci. U.S.A.">
        <title>The complete genome sequence of the Arabidopsis and tomato pathogen Pseudomonas syringae pv. tomato DC3000.</title>
        <authorList>
            <person name="Buell C.R."/>
            <person name="Joardar V."/>
            <person name="Lindeberg M."/>
            <person name="Selengut J."/>
            <person name="Paulsen I.T."/>
            <person name="Gwinn M.L."/>
            <person name="Dodson R.J."/>
            <person name="DeBoy R.T."/>
            <person name="Durkin A.S."/>
            <person name="Kolonay J.F."/>
            <person name="Madupu R."/>
            <person name="Daugherty S.C."/>
            <person name="Brinkac L.M."/>
            <person name="Beanan M.J."/>
            <person name="Haft D.H."/>
            <person name="Nelson W.C."/>
            <person name="Davidsen T.M."/>
            <person name="Zafar N."/>
            <person name="Zhou L."/>
            <person name="Liu J."/>
            <person name="Yuan Q."/>
            <person name="Khouri H.M."/>
            <person name="Fedorova N.B."/>
            <person name="Tran B."/>
            <person name="Russell D."/>
            <person name="Berry K.J."/>
            <person name="Utterback T.R."/>
            <person name="Van Aken S.E."/>
            <person name="Feldblyum T.V."/>
            <person name="D'Ascenzo M."/>
            <person name="Deng W.-L."/>
            <person name="Ramos A.R."/>
            <person name="Alfano J.R."/>
            <person name="Cartinhour S."/>
            <person name="Chatterjee A.K."/>
            <person name="Delaney T.P."/>
            <person name="Lazarowitz S.G."/>
            <person name="Martin G.B."/>
            <person name="Schneider D.J."/>
            <person name="Tang X."/>
            <person name="Bender C.L."/>
            <person name="White O."/>
            <person name="Fraser C.M."/>
            <person name="Collmer A."/>
        </authorList>
    </citation>
    <scope>NUCLEOTIDE SEQUENCE [LARGE SCALE GENOMIC DNA]</scope>
    <source>
        <strain>ATCC BAA-871 / DC3000</strain>
    </source>
</reference>
<gene>
    <name evidence="1" type="primary">ileS</name>
    <name type="ordered locus">PSPTO_0806</name>
</gene>
<dbReference type="EC" id="6.1.1.5" evidence="1"/>
<dbReference type="EMBL" id="AE016853">
    <property type="protein sequence ID" value="AAO54348.1"/>
    <property type="molecule type" value="Genomic_DNA"/>
</dbReference>
<dbReference type="RefSeq" id="NP_790653.1">
    <property type="nucleotide sequence ID" value="NC_004578.1"/>
</dbReference>
<dbReference type="RefSeq" id="WP_011103291.1">
    <property type="nucleotide sequence ID" value="NC_004578.1"/>
</dbReference>
<dbReference type="SMR" id="Q889E4"/>
<dbReference type="STRING" id="223283.PSPTO_0806"/>
<dbReference type="GeneID" id="1182431"/>
<dbReference type="KEGG" id="pst:PSPTO_0806"/>
<dbReference type="PATRIC" id="fig|223283.9.peg.819"/>
<dbReference type="eggNOG" id="COG0060">
    <property type="taxonomic scope" value="Bacteria"/>
</dbReference>
<dbReference type="HOGENOM" id="CLU_001493_7_0_6"/>
<dbReference type="OrthoDB" id="9810365at2"/>
<dbReference type="PhylomeDB" id="Q889E4"/>
<dbReference type="Proteomes" id="UP000002515">
    <property type="component" value="Chromosome"/>
</dbReference>
<dbReference type="GO" id="GO:0005829">
    <property type="term" value="C:cytosol"/>
    <property type="evidence" value="ECO:0007669"/>
    <property type="project" value="TreeGrafter"/>
</dbReference>
<dbReference type="GO" id="GO:0002161">
    <property type="term" value="F:aminoacyl-tRNA deacylase activity"/>
    <property type="evidence" value="ECO:0007669"/>
    <property type="project" value="InterPro"/>
</dbReference>
<dbReference type="GO" id="GO:0005524">
    <property type="term" value="F:ATP binding"/>
    <property type="evidence" value="ECO:0007669"/>
    <property type="project" value="UniProtKB-UniRule"/>
</dbReference>
<dbReference type="GO" id="GO:0004822">
    <property type="term" value="F:isoleucine-tRNA ligase activity"/>
    <property type="evidence" value="ECO:0007669"/>
    <property type="project" value="UniProtKB-UniRule"/>
</dbReference>
<dbReference type="GO" id="GO:0000049">
    <property type="term" value="F:tRNA binding"/>
    <property type="evidence" value="ECO:0007669"/>
    <property type="project" value="InterPro"/>
</dbReference>
<dbReference type="GO" id="GO:0008270">
    <property type="term" value="F:zinc ion binding"/>
    <property type="evidence" value="ECO:0007669"/>
    <property type="project" value="UniProtKB-UniRule"/>
</dbReference>
<dbReference type="GO" id="GO:0006428">
    <property type="term" value="P:isoleucyl-tRNA aminoacylation"/>
    <property type="evidence" value="ECO:0007669"/>
    <property type="project" value="UniProtKB-UniRule"/>
</dbReference>
<dbReference type="CDD" id="cd07960">
    <property type="entry name" value="Anticodon_Ia_Ile_BEm"/>
    <property type="match status" value="1"/>
</dbReference>
<dbReference type="FunFam" id="1.10.730.20:FF:000001">
    <property type="entry name" value="Isoleucine--tRNA ligase"/>
    <property type="match status" value="1"/>
</dbReference>
<dbReference type="FunFam" id="3.40.50.620:FF:000042">
    <property type="entry name" value="Isoleucine--tRNA ligase"/>
    <property type="match status" value="1"/>
</dbReference>
<dbReference type="FunFam" id="3.40.50.620:FF:000048">
    <property type="entry name" value="Isoleucine--tRNA ligase"/>
    <property type="match status" value="1"/>
</dbReference>
<dbReference type="Gene3D" id="1.10.730.20">
    <property type="match status" value="1"/>
</dbReference>
<dbReference type="Gene3D" id="3.40.50.620">
    <property type="entry name" value="HUPs"/>
    <property type="match status" value="2"/>
</dbReference>
<dbReference type="HAMAP" id="MF_02002">
    <property type="entry name" value="Ile_tRNA_synth_type1"/>
    <property type="match status" value="1"/>
</dbReference>
<dbReference type="InterPro" id="IPR001412">
    <property type="entry name" value="aa-tRNA-synth_I_CS"/>
</dbReference>
<dbReference type="InterPro" id="IPR002300">
    <property type="entry name" value="aa-tRNA-synth_Ia"/>
</dbReference>
<dbReference type="InterPro" id="IPR033708">
    <property type="entry name" value="Anticodon_Ile_BEm"/>
</dbReference>
<dbReference type="InterPro" id="IPR002301">
    <property type="entry name" value="Ile-tRNA-ligase"/>
</dbReference>
<dbReference type="InterPro" id="IPR023585">
    <property type="entry name" value="Ile-tRNA-ligase_type1"/>
</dbReference>
<dbReference type="InterPro" id="IPR050081">
    <property type="entry name" value="Ile-tRNA_ligase"/>
</dbReference>
<dbReference type="InterPro" id="IPR013155">
    <property type="entry name" value="M/V/L/I-tRNA-synth_anticd-bd"/>
</dbReference>
<dbReference type="InterPro" id="IPR014729">
    <property type="entry name" value="Rossmann-like_a/b/a_fold"/>
</dbReference>
<dbReference type="InterPro" id="IPR009080">
    <property type="entry name" value="tRNAsynth_Ia_anticodon-bd"/>
</dbReference>
<dbReference type="InterPro" id="IPR009008">
    <property type="entry name" value="Val/Leu/Ile-tRNA-synth_edit"/>
</dbReference>
<dbReference type="InterPro" id="IPR010663">
    <property type="entry name" value="Znf_FPG/IleRS"/>
</dbReference>
<dbReference type="NCBIfam" id="TIGR00392">
    <property type="entry name" value="ileS"/>
    <property type="match status" value="1"/>
</dbReference>
<dbReference type="PANTHER" id="PTHR42765:SF1">
    <property type="entry name" value="ISOLEUCINE--TRNA LIGASE, MITOCHONDRIAL"/>
    <property type="match status" value="1"/>
</dbReference>
<dbReference type="PANTHER" id="PTHR42765">
    <property type="entry name" value="SOLEUCYL-TRNA SYNTHETASE"/>
    <property type="match status" value="1"/>
</dbReference>
<dbReference type="Pfam" id="PF08264">
    <property type="entry name" value="Anticodon_1"/>
    <property type="match status" value="1"/>
</dbReference>
<dbReference type="Pfam" id="PF00133">
    <property type="entry name" value="tRNA-synt_1"/>
    <property type="match status" value="1"/>
</dbReference>
<dbReference type="Pfam" id="PF06827">
    <property type="entry name" value="zf-FPG_IleRS"/>
    <property type="match status" value="1"/>
</dbReference>
<dbReference type="PRINTS" id="PR00984">
    <property type="entry name" value="TRNASYNTHILE"/>
</dbReference>
<dbReference type="SUPFAM" id="SSF47323">
    <property type="entry name" value="Anticodon-binding domain of a subclass of class I aminoacyl-tRNA synthetases"/>
    <property type="match status" value="1"/>
</dbReference>
<dbReference type="SUPFAM" id="SSF52374">
    <property type="entry name" value="Nucleotidylyl transferase"/>
    <property type="match status" value="1"/>
</dbReference>
<dbReference type="SUPFAM" id="SSF50677">
    <property type="entry name" value="ValRS/IleRS/LeuRS editing domain"/>
    <property type="match status" value="1"/>
</dbReference>
<dbReference type="PROSITE" id="PS00178">
    <property type="entry name" value="AA_TRNA_LIGASE_I"/>
    <property type="match status" value="1"/>
</dbReference>
<organism>
    <name type="scientific">Pseudomonas syringae pv. tomato (strain ATCC BAA-871 / DC3000)</name>
    <dbReference type="NCBI Taxonomy" id="223283"/>
    <lineage>
        <taxon>Bacteria</taxon>
        <taxon>Pseudomonadati</taxon>
        <taxon>Pseudomonadota</taxon>
        <taxon>Gammaproteobacteria</taxon>
        <taxon>Pseudomonadales</taxon>
        <taxon>Pseudomonadaceae</taxon>
        <taxon>Pseudomonas</taxon>
    </lineage>
</organism>
<comment type="function">
    <text evidence="1">Catalyzes the attachment of isoleucine to tRNA(Ile). As IleRS can inadvertently accommodate and process structurally similar amino acids such as valine, to avoid such errors it has two additional distinct tRNA(Ile)-dependent editing activities. One activity is designated as 'pretransfer' editing and involves the hydrolysis of activated Val-AMP. The other activity is designated 'posttransfer' editing and involves deacylation of mischarged Val-tRNA(Ile).</text>
</comment>
<comment type="catalytic activity">
    <reaction evidence="1">
        <text>tRNA(Ile) + L-isoleucine + ATP = L-isoleucyl-tRNA(Ile) + AMP + diphosphate</text>
        <dbReference type="Rhea" id="RHEA:11060"/>
        <dbReference type="Rhea" id="RHEA-COMP:9666"/>
        <dbReference type="Rhea" id="RHEA-COMP:9695"/>
        <dbReference type="ChEBI" id="CHEBI:30616"/>
        <dbReference type="ChEBI" id="CHEBI:33019"/>
        <dbReference type="ChEBI" id="CHEBI:58045"/>
        <dbReference type="ChEBI" id="CHEBI:78442"/>
        <dbReference type="ChEBI" id="CHEBI:78528"/>
        <dbReference type="ChEBI" id="CHEBI:456215"/>
        <dbReference type="EC" id="6.1.1.5"/>
    </reaction>
</comment>
<comment type="cofactor">
    <cofactor evidence="1">
        <name>Zn(2+)</name>
        <dbReference type="ChEBI" id="CHEBI:29105"/>
    </cofactor>
    <text evidence="1">Binds 1 zinc ion per subunit.</text>
</comment>
<comment type="subunit">
    <text evidence="1">Monomer.</text>
</comment>
<comment type="subcellular location">
    <subcellularLocation>
        <location evidence="1">Cytoplasm</location>
    </subcellularLocation>
</comment>
<comment type="domain">
    <text evidence="1">IleRS has two distinct active sites: one for aminoacylation and one for editing. The misactivated valine is translocated from the active site to the editing site, which sterically excludes the correctly activated isoleucine. The single editing site contains two valyl binding pockets, one specific for each substrate (Val-AMP or Val-tRNA(Ile)).</text>
</comment>
<comment type="similarity">
    <text evidence="1">Belongs to the class-I aminoacyl-tRNA synthetase family. IleS type 1 subfamily.</text>
</comment>
<protein>
    <recommendedName>
        <fullName evidence="1">Isoleucine--tRNA ligase</fullName>
        <ecNumber evidence="1">6.1.1.5</ecNumber>
    </recommendedName>
    <alternativeName>
        <fullName evidence="1">Isoleucyl-tRNA synthetase</fullName>
        <shortName evidence="1">IleRS</shortName>
    </alternativeName>
</protein>